<comment type="function">
    <text evidence="1">Single strand-specific metallo-endoribonuclease involved in late-stage 70S ribosome quality control and in maturation of the 3' terminus of the 16S rRNA.</text>
</comment>
<comment type="cofactor">
    <cofactor evidence="1">
        <name>Zn(2+)</name>
        <dbReference type="ChEBI" id="CHEBI:29105"/>
    </cofactor>
    <text evidence="1">Binds 1 zinc ion.</text>
</comment>
<comment type="subcellular location">
    <subcellularLocation>
        <location evidence="1">Cytoplasm</location>
    </subcellularLocation>
</comment>
<comment type="similarity">
    <text evidence="1">Belongs to the endoribonuclease YbeY family.</text>
</comment>
<proteinExistence type="inferred from homology"/>
<reference key="1">
    <citation type="journal article" date="2011" name="J. Bacteriol.">
        <title>Comparative genomics of 28 Salmonella enterica isolates: evidence for CRISPR-mediated adaptive sublineage evolution.</title>
        <authorList>
            <person name="Fricke W.F."/>
            <person name="Mammel M.K."/>
            <person name="McDermott P.F."/>
            <person name="Tartera C."/>
            <person name="White D.G."/>
            <person name="Leclerc J.E."/>
            <person name="Ravel J."/>
            <person name="Cebula T.A."/>
        </authorList>
    </citation>
    <scope>NUCLEOTIDE SEQUENCE [LARGE SCALE GENOMIC DNA]</scope>
    <source>
        <strain>CVM19633</strain>
    </source>
</reference>
<sequence>MSQVILDLQLACENHAGLPDEAQFQRWLDGVIPQFQEEAEVTIRLVDEAESHDLNLTYRGKDKPTNVLSFPFEAPPGIEMPLLGDLIICRQVVEQEAQEQSKPLEAHWAHMVVHGSLHLLGYDHIDDDEAEEMESLETEIMLAMGYEDPYIAEKIAE</sequence>
<organism>
    <name type="scientific">Salmonella schwarzengrund (strain CVM19633)</name>
    <dbReference type="NCBI Taxonomy" id="439843"/>
    <lineage>
        <taxon>Bacteria</taxon>
        <taxon>Pseudomonadati</taxon>
        <taxon>Pseudomonadota</taxon>
        <taxon>Gammaproteobacteria</taxon>
        <taxon>Enterobacterales</taxon>
        <taxon>Enterobacteriaceae</taxon>
        <taxon>Salmonella</taxon>
    </lineage>
</organism>
<keyword id="KW-0963">Cytoplasm</keyword>
<keyword id="KW-0255">Endonuclease</keyword>
<keyword id="KW-0378">Hydrolase</keyword>
<keyword id="KW-0479">Metal-binding</keyword>
<keyword id="KW-0540">Nuclease</keyword>
<keyword id="KW-0690">Ribosome biogenesis</keyword>
<keyword id="KW-0698">rRNA processing</keyword>
<keyword id="KW-0862">Zinc</keyword>
<feature type="chain" id="PRO_1000089208" description="Endoribonuclease YbeY">
    <location>
        <begin position="1"/>
        <end position="157"/>
    </location>
</feature>
<feature type="binding site" evidence="1">
    <location>
        <position position="114"/>
    </location>
    <ligand>
        <name>Zn(2+)</name>
        <dbReference type="ChEBI" id="CHEBI:29105"/>
        <note>catalytic</note>
    </ligand>
</feature>
<feature type="binding site" evidence="1">
    <location>
        <position position="118"/>
    </location>
    <ligand>
        <name>Zn(2+)</name>
        <dbReference type="ChEBI" id="CHEBI:29105"/>
        <note>catalytic</note>
    </ligand>
</feature>
<feature type="binding site" evidence="1">
    <location>
        <position position="124"/>
    </location>
    <ligand>
        <name>Zn(2+)</name>
        <dbReference type="ChEBI" id="CHEBI:29105"/>
        <note>catalytic</note>
    </ligand>
</feature>
<dbReference type="EC" id="3.1.-.-" evidence="1"/>
<dbReference type="EMBL" id="CP001127">
    <property type="protein sequence ID" value="ACF89485.1"/>
    <property type="molecule type" value="Genomic_DNA"/>
</dbReference>
<dbReference type="RefSeq" id="WP_000084477.1">
    <property type="nucleotide sequence ID" value="NC_011094.1"/>
</dbReference>
<dbReference type="SMR" id="B4TPY8"/>
<dbReference type="KEGG" id="sew:SeSA_A0822"/>
<dbReference type="HOGENOM" id="CLU_106710_0_1_6"/>
<dbReference type="Proteomes" id="UP000001865">
    <property type="component" value="Chromosome"/>
</dbReference>
<dbReference type="GO" id="GO:0005737">
    <property type="term" value="C:cytoplasm"/>
    <property type="evidence" value="ECO:0007669"/>
    <property type="project" value="UniProtKB-SubCell"/>
</dbReference>
<dbReference type="GO" id="GO:0004222">
    <property type="term" value="F:metalloendopeptidase activity"/>
    <property type="evidence" value="ECO:0007669"/>
    <property type="project" value="InterPro"/>
</dbReference>
<dbReference type="GO" id="GO:0004521">
    <property type="term" value="F:RNA endonuclease activity"/>
    <property type="evidence" value="ECO:0007669"/>
    <property type="project" value="UniProtKB-UniRule"/>
</dbReference>
<dbReference type="GO" id="GO:0008270">
    <property type="term" value="F:zinc ion binding"/>
    <property type="evidence" value="ECO:0007669"/>
    <property type="project" value="UniProtKB-UniRule"/>
</dbReference>
<dbReference type="GO" id="GO:0006364">
    <property type="term" value="P:rRNA processing"/>
    <property type="evidence" value="ECO:0007669"/>
    <property type="project" value="UniProtKB-UniRule"/>
</dbReference>
<dbReference type="Gene3D" id="3.40.390.30">
    <property type="entry name" value="Metalloproteases ('zincins'), catalytic domain"/>
    <property type="match status" value="1"/>
</dbReference>
<dbReference type="HAMAP" id="MF_00009">
    <property type="entry name" value="Endoribonucl_YbeY"/>
    <property type="match status" value="1"/>
</dbReference>
<dbReference type="InterPro" id="IPR023091">
    <property type="entry name" value="MetalPrtase_cat_dom_sf_prd"/>
</dbReference>
<dbReference type="InterPro" id="IPR002036">
    <property type="entry name" value="YbeY"/>
</dbReference>
<dbReference type="InterPro" id="IPR020549">
    <property type="entry name" value="YbeY_CS"/>
</dbReference>
<dbReference type="NCBIfam" id="TIGR00043">
    <property type="entry name" value="rRNA maturation RNase YbeY"/>
    <property type="match status" value="1"/>
</dbReference>
<dbReference type="PANTHER" id="PTHR46986">
    <property type="entry name" value="ENDORIBONUCLEASE YBEY, CHLOROPLASTIC"/>
    <property type="match status" value="1"/>
</dbReference>
<dbReference type="PANTHER" id="PTHR46986:SF1">
    <property type="entry name" value="ENDORIBONUCLEASE YBEY, CHLOROPLASTIC"/>
    <property type="match status" value="1"/>
</dbReference>
<dbReference type="Pfam" id="PF02130">
    <property type="entry name" value="YbeY"/>
    <property type="match status" value="1"/>
</dbReference>
<dbReference type="SUPFAM" id="SSF55486">
    <property type="entry name" value="Metalloproteases ('zincins'), catalytic domain"/>
    <property type="match status" value="1"/>
</dbReference>
<dbReference type="PROSITE" id="PS01306">
    <property type="entry name" value="UPF0054"/>
    <property type="match status" value="1"/>
</dbReference>
<evidence type="ECO:0000255" key="1">
    <source>
        <dbReference type="HAMAP-Rule" id="MF_00009"/>
    </source>
</evidence>
<protein>
    <recommendedName>
        <fullName evidence="1">Endoribonuclease YbeY</fullName>
        <ecNumber evidence="1">3.1.-.-</ecNumber>
    </recommendedName>
</protein>
<name>YBEY_SALSV</name>
<gene>
    <name evidence="1" type="primary">ybeY</name>
    <name type="ordered locus">SeSA_A0822</name>
</gene>
<accession>B4TPY8</accession>